<feature type="chain" id="PRO_0000386840" description="Ribosomal RNA small subunit methyltransferase H">
    <location>
        <begin position="1"/>
        <end position="349"/>
    </location>
</feature>
<feature type="region of interest" description="Disordered" evidence="2">
    <location>
        <begin position="328"/>
        <end position="349"/>
    </location>
</feature>
<feature type="binding site" evidence="1">
    <location>
        <begin position="34"/>
        <end position="36"/>
    </location>
    <ligand>
        <name>S-adenosyl-L-methionine</name>
        <dbReference type="ChEBI" id="CHEBI:59789"/>
    </ligand>
</feature>
<feature type="binding site" evidence="1">
    <location>
        <position position="54"/>
    </location>
    <ligand>
        <name>S-adenosyl-L-methionine</name>
        <dbReference type="ChEBI" id="CHEBI:59789"/>
    </ligand>
</feature>
<feature type="binding site" evidence="1">
    <location>
        <position position="81"/>
    </location>
    <ligand>
        <name>S-adenosyl-L-methionine</name>
        <dbReference type="ChEBI" id="CHEBI:59789"/>
    </ligand>
</feature>
<feature type="binding site" evidence="1">
    <location>
        <position position="102"/>
    </location>
    <ligand>
        <name>S-adenosyl-L-methionine</name>
        <dbReference type="ChEBI" id="CHEBI:59789"/>
    </ligand>
</feature>
<feature type="binding site" evidence="1">
    <location>
        <position position="109"/>
    </location>
    <ligand>
        <name>S-adenosyl-L-methionine</name>
        <dbReference type="ChEBI" id="CHEBI:59789"/>
    </ligand>
</feature>
<comment type="function">
    <text evidence="1">Specifically methylates the N4 position of cytidine in position 1402 (C1402) of 16S rRNA.</text>
</comment>
<comment type="catalytic activity">
    <reaction evidence="1">
        <text>cytidine(1402) in 16S rRNA + S-adenosyl-L-methionine = N(4)-methylcytidine(1402) in 16S rRNA + S-adenosyl-L-homocysteine + H(+)</text>
        <dbReference type="Rhea" id="RHEA:42928"/>
        <dbReference type="Rhea" id="RHEA-COMP:10286"/>
        <dbReference type="Rhea" id="RHEA-COMP:10287"/>
        <dbReference type="ChEBI" id="CHEBI:15378"/>
        <dbReference type="ChEBI" id="CHEBI:57856"/>
        <dbReference type="ChEBI" id="CHEBI:59789"/>
        <dbReference type="ChEBI" id="CHEBI:74506"/>
        <dbReference type="ChEBI" id="CHEBI:82748"/>
        <dbReference type="EC" id="2.1.1.199"/>
    </reaction>
</comment>
<comment type="subcellular location">
    <subcellularLocation>
        <location evidence="1">Cytoplasm</location>
    </subcellularLocation>
</comment>
<comment type="similarity">
    <text evidence="1">Belongs to the methyltransferase superfamily. RsmH family.</text>
</comment>
<name>RSMH_DEHMB</name>
<gene>
    <name evidence="1" type="primary">rsmH</name>
    <name type="synonym">mraW</name>
    <name type="ordered locus">DehaBAV1_0320</name>
</gene>
<reference key="1">
    <citation type="submission" date="2007-05" db="EMBL/GenBank/DDBJ databases">
        <title>Complete sequence of Dehalococcoides sp. BAV1.</title>
        <authorList>
            <consortium name="US DOE Joint Genome Institute"/>
            <person name="Copeland A."/>
            <person name="Lucas S."/>
            <person name="Lapidus A."/>
            <person name="Barry K."/>
            <person name="Detter J.C."/>
            <person name="Glavina del Rio T."/>
            <person name="Hammon N."/>
            <person name="Israni S."/>
            <person name="Pitluck S."/>
            <person name="Lowry S."/>
            <person name="Clum A."/>
            <person name="Schmutz J."/>
            <person name="Larimer F."/>
            <person name="Land M."/>
            <person name="Hauser L."/>
            <person name="Kyrpides N."/>
            <person name="Kim E."/>
            <person name="Ritalahti K.M."/>
            <person name="Loeffler F."/>
            <person name="Richardson P."/>
        </authorList>
    </citation>
    <scope>NUCLEOTIDE SEQUENCE [LARGE SCALE GENOMIC DNA]</scope>
    <source>
        <strain>ATCC BAA-2100 / JCM 16839 / KCTC 5957 / BAV1</strain>
    </source>
</reference>
<keyword id="KW-0963">Cytoplasm</keyword>
<keyword id="KW-0489">Methyltransferase</keyword>
<keyword id="KW-0698">rRNA processing</keyword>
<keyword id="KW-0949">S-adenosyl-L-methionine</keyword>
<keyword id="KW-0808">Transferase</keyword>
<protein>
    <recommendedName>
        <fullName evidence="1">Ribosomal RNA small subunit methyltransferase H</fullName>
        <ecNumber evidence="1">2.1.1.199</ecNumber>
    </recommendedName>
    <alternativeName>
        <fullName evidence="1">16S rRNA m(4)C1402 methyltransferase</fullName>
    </alternativeName>
    <alternativeName>
        <fullName evidence="1">rRNA (cytosine-N(4)-)-methyltransferase RsmH</fullName>
    </alternativeName>
</protein>
<evidence type="ECO:0000255" key="1">
    <source>
        <dbReference type="HAMAP-Rule" id="MF_01007"/>
    </source>
</evidence>
<evidence type="ECO:0000256" key="2">
    <source>
        <dbReference type="SAM" id="MobiDB-lite"/>
    </source>
</evidence>
<dbReference type="EC" id="2.1.1.199" evidence="1"/>
<dbReference type="EMBL" id="CP000688">
    <property type="protein sequence ID" value="ABQ16906.1"/>
    <property type="molecule type" value="Genomic_DNA"/>
</dbReference>
<dbReference type="SMR" id="A5FSB7"/>
<dbReference type="KEGG" id="deb:DehaBAV1_0320"/>
<dbReference type="PATRIC" id="fig|216389.18.peg.359"/>
<dbReference type="HOGENOM" id="CLU_038422_3_0_0"/>
<dbReference type="GO" id="GO:0005737">
    <property type="term" value="C:cytoplasm"/>
    <property type="evidence" value="ECO:0007669"/>
    <property type="project" value="UniProtKB-SubCell"/>
</dbReference>
<dbReference type="GO" id="GO:0071424">
    <property type="term" value="F:rRNA (cytosine-N4-)-methyltransferase activity"/>
    <property type="evidence" value="ECO:0007669"/>
    <property type="project" value="UniProtKB-UniRule"/>
</dbReference>
<dbReference type="GO" id="GO:0070475">
    <property type="term" value="P:rRNA base methylation"/>
    <property type="evidence" value="ECO:0007669"/>
    <property type="project" value="UniProtKB-UniRule"/>
</dbReference>
<dbReference type="Gene3D" id="1.10.150.170">
    <property type="entry name" value="Putative methyltransferase TM0872, insert domain"/>
    <property type="match status" value="1"/>
</dbReference>
<dbReference type="Gene3D" id="3.40.50.150">
    <property type="entry name" value="Vaccinia Virus protein VP39"/>
    <property type="match status" value="1"/>
</dbReference>
<dbReference type="HAMAP" id="MF_01007">
    <property type="entry name" value="16SrRNA_methyltr_H"/>
    <property type="match status" value="1"/>
</dbReference>
<dbReference type="InterPro" id="IPR002903">
    <property type="entry name" value="RsmH"/>
</dbReference>
<dbReference type="InterPro" id="IPR023397">
    <property type="entry name" value="SAM-dep_MeTrfase_MraW_recog"/>
</dbReference>
<dbReference type="InterPro" id="IPR029063">
    <property type="entry name" value="SAM-dependent_MTases_sf"/>
</dbReference>
<dbReference type="NCBIfam" id="TIGR00006">
    <property type="entry name" value="16S rRNA (cytosine(1402)-N(4))-methyltransferase RsmH"/>
    <property type="match status" value="1"/>
</dbReference>
<dbReference type="PANTHER" id="PTHR11265:SF0">
    <property type="entry name" value="12S RRNA N4-METHYLCYTIDINE METHYLTRANSFERASE"/>
    <property type="match status" value="1"/>
</dbReference>
<dbReference type="PANTHER" id="PTHR11265">
    <property type="entry name" value="S-ADENOSYL-METHYLTRANSFERASE MRAW"/>
    <property type="match status" value="1"/>
</dbReference>
<dbReference type="Pfam" id="PF01795">
    <property type="entry name" value="Methyltransf_5"/>
    <property type="match status" value="1"/>
</dbReference>
<dbReference type="PIRSF" id="PIRSF004486">
    <property type="entry name" value="MraW"/>
    <property type="match status" value="1"/>
</dbReference>
<dbReference type="SUPFAM" id="SSF81799">
    <property type="entry name" value="Putative methyltransferase TM0872, insert domain"/>
    <property type="match status" value="1"/>
</dbReference>
<dbReference type="SUPFAM" id="SSF53335">
    <property type="entry name" value="S-adenosyl-L-methionine-dependent methyltransferases"/>
    <property type="match status" value="1"/>
</dbReference>
<accession>A5FSB7</accession>
<proteinExistence type="inferred from homology"/>
<sequence>MIEYPHIPVMLEESIQGLGVIPGGRYVDCTLGAGGHSEAILEHSYPGGQLLSIDADPSAITLAAERLKSFGSSVLLVNDNFANLKDICQRYEYMPVHGILFDLGLSSMQLDRQESGFSFQTEAPLDMRFSPEQELTAADIINGYDVTELSDLIWKYGEEPFSRRIARAIAEKRPFKTTTELAAAIERAVGGRHGRIHPATRTFQALRIAVNEELSHLESALSQAHSLLGHGGRLVVISYHSLEDRIVKQYFQKEAKGCICPDDIPQCVCDHQPSLRIINRRVITPSDEEISRNPRSRSAKMRVAERIIEPGEGRFFSSREDELVNHVSRTGSVQHGQAKHKGVVQRGGS</sequence>
<organism>
    <name type="scientific">Dehalococcoides mccartyi (strain ATCC BAA-2100 / JCM 16839 / KCTC 5957 / BAV1)</name>
    <dbReference type="NCBI Taxonomy" id="216389"/>
    <lineage>
        <taxon>Bacteria</taxon>
        <taxon>Bacillati</taxon>
        <taxon>Chloroflexota</taxon>
        <taxon>Dehalococcoidia</taxon>
        <taxon>Dehalococcoidales</taxon>
        <taxon>Dehalococcoidaceae</taxon>
        <taxon>Dehalococcoides</taxon>
    </lineage>
</organism>